<protein>
    <recommendedName>
        <fullName evidence="1">NADPH-dependent 7-cyano-7-deazaguanine reductase</fullName>
        <ecNumber evidence="1">1.7.1.13</ecNumber>
    </recommendedName>
    <alternativeName>
        <fullName evidence="1">7-cyano-7-carbaguanine reductase</fullName>
    </alternativeName>
    <alternativeName>
        <fullName evidence="1">NADPH-dependent nitrile oxidoreductase</fullName>
    </alternativeName>
    <alternativeName>
        <fullName evidence="1">PreQ(0) reductase</fullName>
    </alternativeName>
</protein>
<comment type="function">
    <text evidence="1">Catalyzes the NADPH-dependent reduction of 7-cyano-7-deazaguanine (preQ0) to 7-aminomethyl-7-deazaguanine (preQ1).</text>
</comment>
<comment type="catalytic activity">
    <reaction evidence="1">
        <text>7-aminomethyl-7-carbaguanine + 2 NADP(+) = 7-cyano-7-deazaguanine + 2 NADPH + 3 H(+)</text>
        <dbReference type="Rhea" id="RHEA:13409"/>
        <dbReference type="ChEBI" id="CHEBI:15378"/>
        <dbReference type="ChEBI" id="CHEBI:45075"/>
        <dbReference type="ChEBI" id="CHEBI:57783"/>
        <dbReference type="ChEBI" id="CHEBI:58349"/>
        <dbReference type="ChEBI" id="CHEBI:58703"/>
        <dbReference type="EC" id="1.7.1.13"/>
    </reaction>
</comment>
<comment type="pathway">
    <text evidence="1">tRNA modification; tRNA-queuosine biosynthesis.</text>
</comment>
<comment type="subcellular location">
    <subcellularLocation>
        <location evidence="1">Cytoplasm</location>
    </subcellularLocation>
</comment>
<comment type="similarity">
    <text evidence="1">Belongs to the GTP cyclohydrolase I family. QueF type 1 subfamily.</text>
</comment>
<keyword id="KW-0963">Cytoplasm</keyword>
<keyword id="KW-0521">NADP</keyword>
<keyword id="KW-0560">Oxidoreductase</keyword>
<keyword id="KW-0671">Queuosine biosynthesis</keyword>
<proteinExistence type="inferred from homology"/>
<name>QUEF_BACFR</name>
<evidence type="ECO:0000255" key="1">
    <source>
        <dbReference type="HAMAP-Rule" id="MF_00818"/>
    </source>
</evidence>
<feature type="chain" id="PRO_0000162959" description="NADPH-dependent 7-cyano-7-deazaguanine reductase">
    <location>
        <begin position="1"/>
        <end position="151"/>
    </location>
</feature>
<feature type="active site" description="Thioimide intermediate" evidence="1">
    <location>
        <position position="51"/>
    </location>
</feature>
<feature type="active site" description="Proton donor" evidence="1">
    <location>
        <position position="58"/>
    </location>
</feature>
<feature type="binding site" evidence="1">
    <location>
        <begin position="73"/>
        <end position="75"/>
    </location>
    <ligand>
        <name>substrate</name>
    </ligand>
</feature>
<feature type="binding site" evidence="1">
    <location>
        <begin position="92"/>
        <end position="93"/>
    </location>
    <ligand>
        <name>substrate</name>
    </ligand>
</feature>
<dbReference type="EC" id="1.7.1.13" evidence="1"/>
<dbReference type="EMBL" id="AP006841">
    <property type="protein sequence ID" value="BAD48217.1"/>
    <property type="molecule type" value="Genomic_DNA"/>
</dbReference>
<dbReference type="RefSeq" id="WP_005786209.1">
    <property type="nucleotide sequence ID" value="NC_006347.1"/>
</dbReference>
<dbReference type="RefSeq" id="YP_098751.1">
    <property type="nucleotide sequence ID" value="NC_006347.1"/>
</dbReference>
<dbReference type="SMR" id="Q64WA9"/>
<dbReference type="STRING" id="295405.BF1466"/>
<dbReference type="KEGG" id="bfr:BF1466"/>
<dbReference type="PATRIC" id="fig|295405.11.peg.1430"/>
<dbReference type="HOGENOM" id="CLU_102489_0_1_10"/>
<dbReference type="OrthoDB" id="9795077at2"/>
<dbReference type="UniPathway" id="UPA00392"/>
<dbReference type="Proteomes" id="UP000002197">
    <property type="component" value="Chromosome"/>
</dbReference>
<dbReference type="GO" id="GO:0005737">
    <property type="term" value="C:cytoplasm"/>
    <property type="evidence" value="ECO:0007669"/>
    <property type="project" value="UniProtKB-SubCell"/>
</dbReference>
<dbReference type="GO" id="GO:0033739">
    <property type="term" value="F:preQ1 synthase activity"/>
    <property type="evidence" value="ECO:0007669"/>
    <property type="project" value="UniProtKB-UniRule"/>
</dbReference>
<dbReference type="GO" id="GO:0008616">
    <property type="term" value="P:queuosine biosynthetic process"/>
    <property type="evidence" value="ECO:0007669"/>
    <property type="project" value="UniProtKB-UniRule"/>
</dbReference>
<dbReference type="GO" id="GO:0006400">
    <property type="term" value="P:tRNA modification"/>
    <property type="evidence" value="ECO:0007669"/>
    <property type="project" value="UniProtKB-UniRule"/>
</dbReference>
<dbReference type="Gene3D" id="3.30.1130.10">
    <property type="match status" value="1"/>
</dbReference>
<dbReference type="HAMAP" id="MF_00818">
    <property type="entry name" value="QueF_type1"/>
    <property type="match status" value="1"/>
</dbReference>
<dbReference type="InterPro" id="IPR043133">
    <property type="entry name" value="GTP-CH-I_C/QueF"/>
</dbReference>
<dbReference type="InterPro" id="IPR050084">
    <property type="entry name" value="NADPH_dep_7-cyano-7-deazaG_red"/>
</dbReference>
<dbReference type="InterPro" id="IPR029500">
    <property type="entry name" value="QueF"/>
</dbReference>
<dbReference type="InterPro" id="IPR016856">
    <property type="entry name" value="QueF_type1"/>
</dbReference>
<dbReference type="NCBIfam" id="TIGR03139">
    <property type="entry name" value="QueF-II"/>
    <property type="match status" value="1"/>
</dbReference>
<dbReference type="PANTHER" id="PTHR34354">
    <property type="entry name" value="NADPH-DEPENDENT 7-CYANO-7-DEAZAGUANINE REDUCTASE"/>
    <property type="match status" value="1"/>
</dbReference>
<dbReference type="PANTHER" id="PTHR34354:SF1">
    <property type="entry name" value="NADPH-DEPENDENT 7-CYANO-7-DEAZAGUANINE REDUCTASE"/>
    <property type="match status" value="1"/>
</dbReference>
<dbReference type="Pfam" id="PF14489">
    <property type="entry name" value="QueF"/>
    <property type="match status" value="1"/>
</dbReference>
<dbReference type="PIRSF" id="PIRSF027377">
    <property type="entry name" value="Nitrile_oxidored_QueF"/>
    <property type="match status" value="1"/>
</dbReference>
<dbReference type="SUPFAM" id="SSF55620">
    <property type="entry name" value="Tetrahydrobiopterin biosynthesis enzymes-like"/>
    <property type="match status" value="1"/>
</dbReference>
<organism>
    <name type="scientific">Bacteroides fragilis (strain YCH46)</name>
    <dbReference type="NCBI Taxonomy" id="295405"/>
    <lineage>
        <taxon>Bacteria</taxon>
        <taxon>Pseudomonadati</taxon>
        <taxon>Bacteroidota</taxon>
        <taxon>Bacteroidia</taxon>
        <taxon>Bacteroidales</taxon>
        <taxon>Bacteroidaceae</taxon>
        <taxon>Bacteroides</taxon>
    </lineage>
</organism>
<reference key="1">
    <citation type="journal article" date="2004" name="Proc. Natl. Acad. Sci. U.S.A.">
        <title>Genomic analysis of Bacteroides fragilis reveals extensive DNA inversions regulating cell surface adaptation.</title>
        <authorList>
            <person name="Kuwahara T."/>
            <person name="Yamashita A."/>
            <person name="Hirakawa H."/>
            <person name="Nakayama H."/>
            <person name="Toh H."/>
            <person name="Okada N."/>
            <person name="Kuhara S."/>
            <person name="Hattori M."/>
            <person name="Hayashi T."/>
            <person name="Ohnishi Y."/>
        </authorList>
    </citation>
    <scope>NUCLEOTIDE SEQUENCE [LARGE SCALE GENOMIC DNA]</scope>
    <source>
        <strain>YCH46</strain>
    </source>
</reference>
<accession>Q64WA9</accession>
<gene>
    <name evidence="1" type="primary">queF</name>
    <name type="ordered locus">BF1466</name>
</gene>
<sequence length="151" mass="17708">MTELKEQLSLLGRKTEYKQDYAPEVLEAFDNKHPENDYWVRFNCPEFTSLCPITGQPDFAEIRISYLPDVKMVESKSLKLYLFSFRNHGAFHEDCVNIIMKDLIRLMDPKYIEVTGIFTPRGGISIYPYANYGRPGTKYEEMATHRLMNHE</sequence>